<dbReference type="EMBL" id="CP000496">
    <property type="protein sequence ID" value="ABN64308.2"/>
    <property type="molecule type" value="Genomic_DNA"/>
</dbReference>
<dbReference type="RefSeq" id="XP_001382337.2">
    <property type="nucleotide sequence ID" value="XM_001382300.1"/>
</dbReference>
<dbReference type="FunCoup" id="A3LNC4">
    <property type="interactions" value="17"/>
</dbReference>
<dbReference type="STRING" id="322104.A3LNC4"/>
<dbReference type="GeneID" id="4837531"/>
<dbReference type="KEGG" id="pic:PICST_55861"/>
<dbReference type="eggNOG" id="ENOG502R3ZQ">
    <property type="taxonomic scope" value="Eukaryota"/>
</dbReference>
<dbReference type="HOGENOM" id="CLU_008912_0_0_1"/>
<dbReference type="InParanoid" id="A3LNC4"/>
<dbReference type="OMA" id="LNCIFNN"/>
<dbReference type="OrthoDB" id="7464126at2759"/>
<dbReference type="Proteomes" id="UP000002258">
    <property type="component" value="Chromosome 2"/>
</dbReference>
<dbReference type="GO" id="GO:0005769">
    <property type="term" value="C:early endosome"/>
    <property type="evidence" value="ECO:0007669"/>
    <property type="project" value="TreeGrafter"/>
</dbReference>
<dbReference type="GO" id="GO:0005770">
    <property type="term" value="C:late endosome"/>
    <property type="evidence" value="ECO:0007669"/>
    <property type="project" value="TreeGrafter"/>
</dbReference>
<dbReference type="GO" id="GO:0005886">
    <property type="term" value="C:plasma membrane"/>
    <property type="evidence" value="ECO:0007669"/>
    <property type="project" value="TreeGrafter"/>
</dbReference>
<dbReference type="GO" id="GO:0030133">
    <property type="term" value="C:transport vesicle"/>
    <property type="evidence" value="ECO:0007669"/>
    <property type="project" value="TreeGrafter"/>
</dbReference>
<dbReference type="GO" id="GO:0097422">
    <property type="term" value="C:tubular endosome"/>
    <property type="evidence" value="ECO:0007669"/>
    <property type="project" value="TreeGrafter"/>
</dbReference>
<dbReference type="GO" id="GO:0005085">
    <property type="term" value="F:guanyl-nucleotide exchange factor activity"/>
    <property type="evidence" value="ECO:0007669"/>
    <property type="project" value="TreeGrafter"/>
</dbReference>
<dbReference type="GO" id="GO:0000149">
    <property type="term" value="F:SNARE binding"/>
    <property type="evidence" value="ECO:0007669"/>
    <property type="project" value="TreeGrafter"/>
</dbReference>
<dbReference type="GO" id="GO:0045022">
    <property type="term" value="P:early endosome to late endosome transport"/>
    <property type="evidence" value="ECO:0007669"/>
    <property type="project" value="TreeGrafter"/>
</dbReference>
<dbReference type="Gene3D" id="1.25.40.20">
    <property type="entry name" value="Ankyrin repeat-containing domain"/>
    <property type="match status" value="1"/>
</dbReference>
<dbReference type="Gene3D" id="1.20.1050.80">
    <property type="entry name" value="VPS9 domain"/>
    <property type="match status" value="1"/>
</dbReference>
<dbReference type="InterPro" id="IPR036770">
    <property type="entry name" value="Ankyrin_rpt-contain_sf"/>
</dbReference>
<dbReference type="InterPro" id="IPR051248">
    <property type="entry name" value="UPF0507/Ank_repeat_27"/>
</dbReference>
<dbReference type="InterPro" id="IPR003123">
    <property type="entry name" value="VPS9"/>
</dbReference>
<dbReference type="InterPro" id="IPR037191">
    <property type="entry name" value="VPS9_dom_sf"/>
</dbReference>
<dbReference type="PANTHER" id="PTHR24170">
    <property type="entry name" value="ANKYRIN REPEAT DOMAIN-CONTAINING PROTEIN 27"/>
    <property type="match status" value="1"/>
</dbReference>
<dbReference type="PANTHER" id="PTHR24170:SF1">
    <property type="entry name" value="DOMAIN PROTEIN, PUTATIVE (AFU_ORTHOLOGUE AFUA_1G09870)-RELATED"/>
    <property type="match status" value="1"/>
</dbReference>
<dbReference type="Pfam" id="PF02204">
    <property type="entry name" value="VPS9"/>
    <property type="match status" value="1"/>
</dbReference>
<dbReference type="SUPFAM" id="SSF48403">
    <property type="entry name" value="Ankyrin repeat"/>
    <property type="match status" value="1"/>
</dbReference>
<dbReference type="SUPFAM" id="SSF109993">
    <property type="entry name" value="VPS9 domain"/>
    <property type="match status" value="1"/>
</dbReference>
<dbReference type="PROSITE" id="PS51205">
    <property type="entry name" value="VPS9"/>
    <property type="match status" value="1"/>
</dbReference>
<name>U507_PICST</name>
<sequence>MTPQQKSAAHLPLLYNPFLNCIFNNPYYNKAPFKQTIEELARNHNDFTILVPPAHVLHHCYDPATELSSHKVLLRELCYNNEEFIRSHIIRTGTSYSSTITPISKVQSVIYNTMSGKQVLFKNGMVFMGKGFKRSLKLNVLSFQYFSSFCDYFPKGSKFMILYVEDCLIGSFDPHQHLSRIPQDDETSSQRSVSQQEVQDSITFEKLLRSFPLLSKAVSERFYRLFHHNNHQFRVLRINTRKKLEHIRIEFHSMLDEAYKIIQDSIKVENPDSEQTYNIINHILSIYPGLDLNRLVHDYVELNLYDKLWAQLLFQYNYPNDDKQSYDPEAVKFLTAETYNRLSCLALNQLDIPIFKPWQINTLQEKVALAIEEFSKLADSSIVNSTAKTKIIINTVNILSDLKSGSDFVMDADVLIGLLIMVIVHSKIDNLEAHLYYIKNFSAIDYSGDGHFNYIMSNLDAVLFHLSSSLSDELSDLIVHSQQNFEFWSAIQQGDVDAAKTMLDEVHENYVGKEIPSSHYLKSKNINGESCIMFAIKAKNFSIYDMLINEHPNWFSIDELLFDKNIITNQNLVMVALADECPEIATDLVNVILSSATKEEQVAYFNSVDNAGRSVGHYLFHNYKLMGILGDIIDWELKDLNSHTPLFSICRCYDHPNYPTLISEAFACVYQKYGGENINFDKHIDKSGNTLLHIILKNIPESQLLSRKENLISVNQQSSKYMTPLTLYVKYYRLENLKDLLQDNRLDFLLEDSKNCYNVFDYFGFSSMKSTIPNETFKKIESLIFGFYIDNFLPKVDCKKLFSLNAKYDQNKRDWFIFFRDSDGISNHKSLEMLKQIIYFIKLDNPCTYLPDKDVVWLNYGLGSTTPYFHKYRINRLIDTLNLFFTGLLYRNGNCYFERFLETGRDRERSTLDFIQEASLRQEKKRANLGVVKLKSSQIDEIEFFLTFAISDLYKYKDALHKFGKLSAIADMKQTDIRTVYLSALKKLVDREGNYTDELKSKVPVEAEIQDSCWGGFHSYVFWLQISLDELLKSVNKILEEIRTWKELYSSIRELNSELHQIEEKSPSNNNGGSLSRRSTFSIEPIPELDFEDDTTSAFFNFSNIIESKKARYKKLLMTKSEKVKQIMKLNVDIKWEHEVVASEISSFLKFRCDFLRFGVKTYVNSETKRIRNNSIELRKLLRDVKNNGKSYRK</sequence>
<gene>
    <name type="ORF">PICST_55861</name>
</gene>
<accession>A3LNC4</accession>
<reference key="1">
    <citation type="journal article" date="2007" name="Nat. Biotechnol.">
        <title>Genome sequence of the lignocellulose-bioconverting and xylose-fermenting yeast Pichia stipitis.</title>
        <authorList>
            <person name="Jeffries T.W."/>
            <person name="Grigoriev I.V."/>
            <person name="Grimwood J."/>
            <person name="Laplaza J.M."/>
            <person name="Aerts A."/>
            <person name="Salamov A."/>
            <person name="Schmutz J."/>
            <person name="Lindquist E."/>
            <person name="Dehal P."/>
            <person name="Shapiro H."/>
            <person name="Jin Y.-S."/>
            <person name="Passoth V."/>
            <person name="Richardson P.M."/>
        </authorList>
    </citation>
    <scope>NUCLEOTIDE SEQUENCE [LARGE SCALE GENOMIC DNA]</scope>
    <source>
        <strain>ATCC 58785 / CBS 6054 / NBRC 10063 / NRRL Y-11545</strain>
    </source>
</reference>
<feature type="chain" id="PRO_0000311656" description="UPF0507 protein PICST_55861">
    <location>
        <begin position="1"/>
        <end position="1194"/>
    </location>
</feature>
<feature type="domain" description="VPS9" evidence="1">
    <location>
        <begin position="324"/>
        <end position="475"/>
    </location>
</feature>
<proteinExistence type="inferred from homology"/>
<organism>
    <name type="scientific">Scheffersomyces stipitis (strain ATCC 58785 / CBS 6054 / NBRC 10063 / NRRL Y-11545)</name>
    <name type="common">Yeast</name>
    <name type="synonym">Pichia stipitis</name>
    <dbReference type="NCBI Taxonomy" id="322104"/>
    <lineage>
        <taxon>Eukaryota</taxon>
        <taxon>Fungi</taxon>
        <taxon>Dikarya</taxon>
        <taxon>Ascomycota</taxon>
        <taxon>Saccharomycotina</taxon>
        <taxon>Pichiomycetes</taxon>
        <taxon>Debaryomycetaceae</taxon>
        <taxon>Scheffersomyces</taxon>
    </lineage>
</organism>
<evidence type="ECO:0000255" key="1">
    <source>
        <dbReference type="PROSITE-ProRule" id="PRU00550"/>
    </source>
</evidence>
<evidence type="ECO:0000305" key="2"/>
<keyword id="KW-1185">Reference proteome</keyword>
<protein>
    <recommendedName>
        <fullName>UPF0507 protein PICST_55861</fullName>
    </recommendedName>
</protein>
<comment type="similarity">
    <text evidence="2">Belongs to the UPF0507 family.</text>
</comment>